<comment type="function">
    <text evidence="1">Catalyzes the reversible isomerization-deamination of glucosamine 6-phosphate (GlcN6P) to form fructose 6-phosphate (Fru6P) and ammonium ion.</text>
</comment>
<comment type="catalytic activity">
    <reaction evidence="1">
        <text>alpha-D-glucosamine 6-phosphate + H2O = beta-D-fructose 6-phosphate + NH4(+)</text>
        <dbReference type="Rhea" id="RHEA:12172"/>
        <dbReference type="ChEBI" id="CHEBI:15377"/>
        <dbReference type="ChEBI" id="CHEBI:28938"/>
        <dbReference type="ChEBI" id="CHEBI:57634"/>
        <dbReference type="ChEBI" id="CHEBI:75989"/>
        <dbReference type="EC" id="3.5.99.6"/>
    </reaction>
</comment>
<comment type="activity regulation">
    <text evidence="1">Allosterically activated by N-acetylglucosamine 6-phosphate (GlcNAc6P).</text>
</comment>
<comment type="pathway">
    <text evidence="1">Amino-sugar metabolism; N-acetylneuraminate degradation; D-fructose 6-phosphate from N-acetylneuraminate: step 5/5.</text>
</comment>
<comment type="subunit">
    <text evidence="1">Homohexamer; trimer of disulfide-linked dimers.</text>
</comment>
<comment type="similarity">
    <text evidence="1">Belongs to the glucosamine/galactosamine-6-phosphate isomerase family. NagB subfamily.</text>
</comment>
<gene>
    <name evidence="1" type="primary">nagB</name>
    <name type="ordered locus">EcolC_2978</name>
</gene>
<name>NAGB_ECOLC</name>
<feature type="chain" id="PRO_1000085749" description="Glucosamine-6-phosphate deaminase">
    <location>
        <begin position="1"/>
        <end position="266"/>
    </location>
</feature>
<feature type="active site" description="Proton acceptor; for enolization step" evidence="1">
    <location>
        <position position="72"/>
    </location>
</feature>
<feature type="active site" description="For ring-opening step" evidence="1">
    <location>
        <position position="141"/>
    </location>
</feature>
<feature type="active site" description="Proton acceptor; for ring-opening step" evidence="1">
    <location>
        <position position="143"/>
    </location>
</feature>
<feature type="active site" description="For ring-opening step" evidence="1">
    <location>
        <position position="148"/>
    </location>
</feature>
<feature type="site" description="Part of the allosteric site" evidence="1">
    <location>
        <position position="151"/>
    </location>
</feature>
<feature type="site" description="Part of the allosteric site" evidence="1">
    <location>
        <position position="158"/>
    </location>
</feature>
<feature type="site" description="Part of the allosteric site" evidence="1">
    <location>
        <position position="160"/>
    </location>
</feature>
<feature type="site" description="Part of the allosteric site" evidence="1">
    <location>
        <position position="161"/>
    </location>
</feature>
<feature type="site" description="Part of the allosteric site" evidence="1">
    <location>
        <position position="254"/>
    </location>
</feature>
<feature type="disulfide bond" description="Interchain" evidence="1">
    <location>
        <position position="219"/>
    </location>
</feature>
<evidence type="ECO:0000255" key="1">
    <source>
        <dbReference type="HAMAP-Rule" id="MF_01241"/>
    </source>
</evidence>
<proteinExistence type="inferred from homology"/>
<sequence>MRLIPLTTAEQVGKWAARHIVNRINAFKPTADRPFVLGLPTGGTPMTTYKALVEMHKAGQVSFKHVVTFNMDEYVGLPKEHPESYYSFMHRNFFDHVDIPAENINLLNGNAPDIDAECRQYEEKIRSYGKIHLFMGGVGNDGHIAFNEPASSLASRTRIKTLTHDTRVANSRFFDNDVNQVPKYALTVGVGTLLDAEEVMILVLGSQKALALQAAVEGCVNHMWTISCLQLHPKAIMVCDEPSTMELKVKTLRYFNELEAENIKGL</sequence>
<dbReference type="EC" id="3.5.99.6" evidence="1"/>
<dbReference type="EMBL" id="CP000946">
    <property type="protein sequence ID" value="ACA78603.1"/>
    <property type="molecule type" value="Genomic_DNA"/>
</dbReference>
<dbReference type="RefSeq" id="WP_001237072.1">
    <property type="nucleotide sequence ID" value="NZ_MTFT01000005.1"/>
</dbReference>
<dbReference type="SMR" id="B1IY50"/>
<dbReference type="GeneID" id="93776807"/>
<dbReference type="KEGG" id="ecl:EcolC_2978"/>
<dbReference type="HOGENOM" id="CLU_049611_0_1_6"/>
<dbReference type="UniPathway" id="UPA00629">
    <property type="reaction ID" value="UER00684"/>
</dbReference>
<dbReference type="GO" id="GO:0005829">
    <property type="term" value="C:cytosol"/>
    <property type="evidence" value="ECO:0007669"/>
    <property type="project" value="TreeGrafter"/>
</dbReference>
<dbReference type="GO" id="GO:0004342">
    <property type="term" value="F:glucosamine-6-phosphate deaminase activity"/>
    <property type="evidence" value="ECO:0007669"/>
    <property type="project" value="UniProtKB-UniRule"/>
</dbReference>
<dbReference type="GO" id="GO:0042802">
    <property type="term" value="F:identical protein binding"/>
    <property type="evidence" value="ECO:0007669"/>
    <property type="project" value="TreeGrafter"/>
</dbReference>
<dbReference type="GO" id="GO:0005975">
    <property type="term" value="P:carbohydrate metabolic process"/>
    <property type="evidence" value="ECO:0007669"/>
    <property type="project" value="InterPro"/>
</dbReference>
<dbReference type="GO" id="GO:0006043">
    <property type="term" value="P:glucosamine catabolic process"/>
    <property type="evidence" value="ECO:0007669"/>
    <property type="project" value="TreeGrafter"/>
</dbReference>
<dbReference type="GO" id="GO:0006046">
    <property type="term" value="P:N-acetylglucosamine catabolic process"/>
    <property type="evidence" value="ECO:0007669"/>
    <property type="project" value="TreeGrafter"/>
</dbReference>
<dbReference type="GO" id="GO:0019262">
    <property type="term" value="P:N-acetylneuraminate catabolic process"/>
    <property type="evidence" value="ECO:0007669"/>
    <property type="project" value="UniProtKB-UniRule"/>
</dbReference>
<dbReference type="CDD" id="cd01399">
    <property type="entry name" value="GlcN6P_deaminase"/>
    <property type="match status" value="1"/>
</dbReference>
<dbReference type="FunFam" id="3.40.50.1360:FF:000002">
    <property type="entry name" value="Glucosamine-6-phosphate deaminase"/>
    <property type="match status" value="1"/>
</dbReference>
<dbReference type="Gene3D" id="3.40.50.1360">
    <property type="match status" value="1"/>
</dbReference>
<dbReference type="HAMAP" id="MF_01241">
    <property type="entry name" value="GlcN6P_deamin"/>
    <property type="match status" value="1"/>
</dbReference>
<dbReference type="InterPro" id="IPR006148">
    <property type="entry name" value="Glc/Gal-6P_isomerase"/>
</dbReference>
<dbReference type="InterPro" id="IPR004547">
    <property type="entry name" value="Glucosamine6P_isomerase"/>
</dbReference>
<dbReference type="InterPro" id="IPR018321">
    <property type="entry name" value="Glucosamine6P_isomerase_CS"/>
</dbReference>
<dbReference type="InterPro" id="IPR037171">
    <property type="entry name" value="NagB/RpiA_transferase-like"/>
</dbReference>
<dbReference type="NCBIfam" id="TIGR00502">
    <property type="entry name" value="nagB"/>
    <property type="match status" value="1"/>
</dbReference>
<dbReference type="NCBIfam" id="NF001685">
    <property type="entry name" value="PRK00443.1-5"/>
    <property type="match status" value="1"/>
</dbReference>
<dbReference type="PANTHER" id="PTHR11280">
    <property type="entry name" value="GLUCOSAMINE-6-PHOSPHATE ISOMERASE"/>
    <property type="match status" value="1"/>
</dbReference>
<dbReference type="PANTHER" id="PTHR11280:SF5">
    <property type="entry name" value="GLUCOSAMINE-6-PHOSPHATE ISOMERASE"/>
    <property type="match status" value="1"/>
</dbReference>
<dbReference type="Pfam" id="PF01182">
    <property type="entry name" value="Glucosamine_iso"/>
    <property type="match status" value="1"/>
</dbReference>
<dbReference type="SUPFAM" id="SSF100950">
    <property type="entry name" value="NagB/RpiA/CoA transferase-like"/>
    <property type="match status" value="1"/>
</dbReference>
<dbReference type="PROSITE" id="PS01161">
    <property type="entry name" value="GLC_GALNAC_ISOMERASE"/>
    <property type="match status" value="1"/>
</dbReference>
<protein>
    <recommendedName>
        <fullName evidence="1">Glucosamine-6-phosphate deaminase</fullName>
        <ecNumber evidence="1">3.5.99.6</ecNumber>
    </recommendedName>
    <alternativeName>
        <fullName evidence="1">GlcN6P deaminase</fullName>
        <shortName evidence="1">GNPDA</shortName>
    </alternativeName>
    <alternativeName>
        <fullName evidence="1">Glucosamine-6-phosphate isomerase</fullName>
    </alternativeName>
</protein>
<reference key="1">
    <citation type="submission" date="2008-02" db="EMBL/GenBank/DDBJ databases">
        <title>Complete sequence of Escherichia coli C str. ATCC 8739.</title>
        <authorList>
            <person name="Copeland A."/>
            <person name="Lucas S."/>
            <person name="Lapidus A."/>
            <person name="Glavina del Rio T."/>
            <person name="Dalin E."/>
            <person name="Tice H."/>
            <person name="Bruce D."/>
            <person name="Goodwin L."/>
            <person name="Pitluck S."/>
            <person name="Kiss H."/>
            <person name="Brettin T."/>
            <person name="Detter J.C."/>
            <person name="Han C."/>
            <person name="Kuske C.R."/>
            <person name="Schmutz J."/>
            <person name="Larimer F."/>
            <person name="Land M."/>
            <person name="Hauser L."/>
            <person name="Kyrpides N."/>
            <person name="Mikhailova N."/>
            <person name="Ingram L."/>
            <person name="Richardson P."/>
        </authorList>
    </citation>
    <scope>NUCLEOTIDE SEQUENCE [LARGE SCALE GENOMIC DNA]</scope>
    <source>
        <strain>ATCC 8739 / DSM 1576 / NBRC 3972 / NCIMB 8545 / WDCM 00012 / Crooks</strain>
    </source>
</reference>
<organism>
    <name type="scientific">Escherichia coli (strain ATCC 8739 / DSM 1576 / NBRC 3972 / NCIMB 8545 / WDCM 00012 / Crooks)</name>
    <dbReference type="NCBI Taxonomy" id="481805"/>
    <lineage>
        <taxon>Bacteria</taxon>
        <taxon>Pseudomonadati</taxon>
        <taxon>Pseudomonadota</taxon>
        <taxon>Gammaproteobacteria</taxon>
        <taxon>Enterobacterales</taxon>
        <taxon>Enterobacteriaceae</taxon>
        <taxon>Escherichia</taxon>
    </lineage>
</organism>
<accession>B1IY50</accession>
<keyword id="KW-0021">Allosteric enzyme</keyword>
<keyword id="KW-0119">Carbohydrate metabolism</keyword>
<keyword id="KW-1015">Disulfide bond</keyword>
<keyword id="KW-0378">Hydrolase</keyword>